<sequence length="98" mass="11478">MAKQNQDENLITLVDEQGNETLYQELFNFHSDDYDKSYILLIPAGSEPEEQVDVLAFAFNPDENDDSQDYELFDIESDEEWEMVEGVLDTFLNDENMR</sequence>
<name>Y1108_LIGS1</name>
<protein>
    <recommendedName>
        <fullName evidence="1">UPF0473 protein LSL_1108</fullName>
    </recommendedName>
</protein>
<proteinExistence type="inferred from homology"/>
<comment type="similarity">
    <text evidence="1">Belongs to the UPF0473 family.</text>
</comment>
<organism>
    <name type="scientific">Ligilactobacillus salivarius (strain UCC118)</name>
    <name type="common">Lactobacillus salivarius</name>
    <dbReference type="NCBI Taxonomy" id="362948"/>
    <lineage>
        <taxon>Bacteria</taxon>
        <taxon>Bacillati</taxon>
        <taxon>Bacillota</taxon>
        <taxon>Bacilli</taxon>
        <taxon>Lactobacillales</taxon>
        <taxon>Lactobacillaceae</taxon>
        <taxon>Ligilactobacillus</taxon>
    </lineage>
</organism>
<reference key="1">
    <citation type="journal article" date="2006" name="Proc. Natl. Acad. Sci. U.S.A.">
        <title>Multireplicon genome architecture of Lactobacillus salivarius.</title>
        <authorList>
            <person name="Claesson M.J."/>
            <person name="Li Y."/>
            <person name="Leahy S."/>
            <person name="Canchaya C."/>
            <person name="van Pijkeren J.P."/>
            <person name="Cerdeno-Tarraga A.M."/>
            <person name="Parkhill J."/>
            <person name="Flynn S."/>
            <person name="O'Sullivan G.C."/>
            <person name="Collins J.K."/>
            <person name="Higgins D."/>
            <person name="Shanahan F."/>
            <person name="Fitzgerald G.F."/>
            <person name="van Sinderen D."/>
            <person name="O'Toole P.W."/>
        </authorList>
    </citation>
    <scope>NUCLEOTIDE SEQUENCE [LARGE SCALE GENOMIC DNA]</scope>
    <source>
        <strain>UCC118</strain>
    </source>
</reference>
<gene>
    <name type="ordered locus">LSL_1108</name>
</gene>
<evidence type="ECO:0000255" key="1">
    <source>
        <dbReference type="HAMAP-Rule" id="MF_01448"/>
    </source>
</evidence>
<keyword id="KW-1185">Reference proteome</keyword>
<dbReference type="EMBL" id="CP000233">
    <property type="protein sequence ID" value="ABD99916.1"/>
    <property type="molecule type" value="Genomic_DNA"/>
</dbReference>
<dbReference type="RefSeq" id="WP_003706616.1">
    <property type="nucleotide sequence ID" value="NC_007929.1"/>
</dbReference>
<dbReference type="RefSeq" id="YP_535999.1">
    <property type="nucleotide sequence ID" value="NC_007929.1"/>
</dbReference>
<dbReference type="STRING" id="362948.LSL_1108"/>
<dbReference type="KEGG" id="lsl:LSL_1108"/>
<dbReference type="PATRIC" id="fig|362948.14.peg.1180"/>
<dbReference type="HOGENOM" id="CLU_146610_2_1_9"/>
<dbReference type="OrthoDB" id="2086132at2"/>
<dbReference type="Proteomes" id="UP000006559">
    <property type="component" value="Chromosome"/>
</dbReference>
<dbReference type="HAMAP" id="MF_01448">
    <property type="entry name" value="UPF0473"/>
    <property type="match status" value="1"/>
</dbReference>
<dbReference type="InterPro" id="IPR009711">
    <property type="entry name" value="UPF0473"/>
</dbReference>
<dbReference type="NCBIfam" id="NF010217">
    <property type="entry name" value="PRK13678.1-4"/>
    <property type="match status" value="1"/>
</dbReference>
<dbReference type="PANTHER" id="PTHR40066">
    <property type="entry name" value="UPF0473 PROTEIN CBO2561/CLC_2432"/>
    <property type="match status" value="1"/>
</dbReference>
<dbReference type="PANTHER" id="PTHR40066:SF1">
    <property type="entry name" value="UPF0473 PROTEIN CBO2561_CLC_2432"/>
    <property type="match status" value="1"/>
</dbReference>
<dbReference type="Pfam" id="PF06949">
    <property type="entry name" value="DUF1292"/>
    <property type="match status" value="1"/>
</dbReference>
<accession>Q1WT35</accession>
<feature type="chain" id="PRO_0000304841" description="UPF0473 protein LSL_1108">
    <location>
        <begin position="1"/>
        <end position="98"/>
    </location>
</feature>